<comment type="function">
    <text>One gap junction consists of a cluster of closely packed pairs of transmembrane channels, the connexons, through which materials of low MW diffuse from one cell to a neighboring cell.</text>
</comment>
<comment type="subunit">
    <text evidence="1">A connexon is composed of a hexamer of connexins. Interacts with CNST (By similarity).</text>
</comment>
<comment type="subcellular location">
    <subcellularLocation>
        <location>Cell membrane</location>
        <topology>Multi-pass membrane protein</topology>
    </subcellularLocation>
    <subcellularLocation>
        <location>Cell junction</location>
        <location>Gap junction</location>
    </subcellularLocation>
</comment>
<comment type="similarity">
    <text evidence="5">Belongs to the connexin family. Beta-type (group I) subfamily.</text>
</comment>
<reference key="1">
    <citation type="journal article" date="1996" name="Mamm. Genome">
        <title>Physical mapping of connexin 32 (GJB1) and 43 (GJA1) genes to bovine chromosomes Xq22 and 9q15/16 by fluorescence in situ hybridization.</title>
        <authorList>
            <person name="Castiglioni B."/>
            <person name="Ferretti L."/>
            <person name="Tenchini M.L."/>
            <person name="Mezzelani A."/>
            <person name="Simonic T."/>
            <person name="Duga S."/>
        </authorList>
    </citation>
    <scope>NUCLEOTIDE SEQUENCE [MRNA]</scope>
    <source>
        <tissue>Liver</tissue>
    </source>
</reference>
<protein>
    <recommendedName>
        <fullName>Gap junction beta-1 protein</fullName>
    </recommendedName>
    <alternativeName>
        <fullName>Connexin-32</fullName>
        <shortName>Cx32</shortName>
    </alternativeName>
</protein>
<evidence type="ECO:0000250" key="1"/>
<evidence type="ECO:0000250" key="2">
    <source>
        <dbReference type="UniProtKB" id="P08033"/>
    </source>
</evidence>
<evidence type="ECO:0000250" key="3">
    <source>
        <dbReference type="UniProtKB" id="P08034"/>
    </source>
</evidence>
<evidence type="ECO:0000255" key="4"/>
<evidence type="ECO:0000305" key="5"/>
<sequence length="284" mass="32083">MNWTGLYTLLSGVNRHSTAIGRVWLSVIFIFRIMVLVVAAESVWGDEKSSFICNTLQPGCNSVCYDHFFPISHVRLWSLQLILVSTPALLVAMHVAHQQHIEKKMLRLEGHGDPLHLEEVKRHKVHISGTLWWTYVISVVFRLLFEAAFMYVFYLLYPGYAMVRLVKCDAYPCPNTVDCFVSRPTEKTIFTVFMLAASGICIILNVAEVVYLIFRACARRAQRRSNPPSRKGSGGFGHRLSPEYKQNEINKLLSEQDGSLKDILRRSPGTGAGLAEKSDRCSAC</sequence>
<gene>
    <name type="primary">GJB1</name>
    <name type="synonym">CXN-32</name>
</gene>
<accession>O18968</accession>
<name>CXB1_BOVIN</name>
<proteinExistence type="evidence at transcript level"/>
<keyword id="KW-0965">Cell junction</keyword>
<keyword id="KW-1003">Cell membrane</keyword>
<keyword id="KW-0303">Gap junction</keyword>
<keyword id="KW-0472">Membrane</keyword>
<keyword id="KW-0597">Phosphoprotein</keyword>
<keyword id="KW-1185">Reference proteome</keyword>
<keyword id="KW-0812">Transmembrane</keyword>
<keyword id="KW-1133">Transmembrane helix</keyword>
<organism>
    <name type="scientific">Bos taurus</name>
    <name type="common">Bovine</name>
    <dbReference type="NCBI Taxonomy" id="9913"/>
    <lineage>
        <taxon>Eukaryota</taxon>
        <taxon>Metazoa</taxon>
        <taxon>Chordata</taxon>
        <taxon>Craniata</taxon>
        <taxon>Vertebrata</taxon>
        <taxon>Euteleostomi</taxon>
        <taxon>Mammalia</taxon>
        <taxon>Eutheria</taxon>
        <taxon>Laurasiatheria</taxon>
        <taxon>Artiodactyla</taxon>
        <taxon>Ruminantia</taxon>
        <taxon>Pecora</taxon>
        <taxon>Bovidae</taxon>
        <taxon>Bovinae</taxon>
        <taxon>Bos</taxon>
    </lineage>
</organism>
<dbReference type="EMBL" id="X95311">
    <property type="protein sequence ID" value="CAA64623.1"/>
    <property type="molecule type" value="mRNA"/>
</dbReference>
<dbReference type="RefSeq" id="NP_776494.1">
    <property type="nucleotide sequence ID" value="NM_174069.2"/>
</dbReference>
<dbReference type="SMR" id="O18968"/>
<dbReference type="FunCoup" id="O18968">
    <property type="interactions" value="143"/>
</dbReference>
<dbReference type="STRING" id="9913.ENSBTAP00000027331"/>
<dbReference type="PaxDb" id="9913-ENSBTAP00000027331"/>
<dbReference type="Ensembl" id="ENSBTAT00000027331.7">
    <property type="protein sequence ID" value="ENSBTAP00000027331.5"/>
    <property type="gene ID" value="ENSBTAG00000020512.7"/>
</dbReference>
<dbReference type="Ensembl" id="ENSBTAT00000090442.1">
    <property type="protein sequence ID" value="ENSBTAP00000086610.1"/>
    <property type="gene ID" value="ENSBTAG00000020512.7"/>
</dbReference>
<dbReference type="Ensembl" id="ENSBTAT00000093011.1">
    <property type="protein sequence ID" value="ENSBTAP00000092982.1"/>
    <property type="gene ID" value="ENSBTAG00000020512.7"/>
</dbReference>
<dbReference type="Ensembl" id="ENSBTAT00000100461.1">
    <property type="protein sequence ID" value="ENSBTAP00000083760.1"/>
    <property type="gene ID" value="ENSBTAG00000020512.7"/>
</dbReference>
<dbReference type="Ensembl" id="ENSBTAT00000101081.1">
    <property type="protein sequence ID" value="ENSBTAP00000092862.1"/>
    <property type="gene ID" value="ENSBTAG00000020512.7"/>
</dbReference>
<dbReference type="Ensembl" id="ENSBTAT00000109575.1">
    <property type="protein sequence ID" value="ENSBTAP00000095790.1"/>
    <property type="gene ID" value="ENSBTAG00000020512.7"/>
</dbReference>
<dbReference type="Ensembl" id="ENSBTAT00000121620.1">
    <property type="protein sequence ID" value="ENSBTAP00000080124.1"/>
    <property type="gene ID" value="ENSBTAG00000020512.7"/>
</dbReference>
<dbReference type="Ensembl" id="ENSBTAT00000121748.1">
    <property type="protein sequence ID" value="ENSBTAP00000101774.1"/>
    <property type="gene ID" value="ENSBTAG00000020512.7"/>
</dbReference>
<dbReference type="GeneID" id="281194"/>
<dbReference type="KEGG" id="bta:281194"/>
<dbReference type="CTD" id="2705"/>
<dbReference type="VEuPathDB" id="HostDB:ENSBTAG00000020512"/>
<dbReference type="VGNC" id="VGNC:29376">
    <property type="gene designation" value="GJB1"/>
</dbReference>
<dbReference type="eggNOG" id="ENOG502R1QN">
    <property type="taxonomic scope" value="Eukaryota"/>
</dbReference>
<dbReference type="GeneTree" id="ENSGT01030000234513"/>
<dbReference type="HOGENOM" id="CLU_037388_4_1_1"/>
<dbReference type="InParanoid" id="O18968"/>
<dbReference type="OMA" id="CIILNMA"/>
<dbReference type="OrthoDB" id="8934037at2759"/>
<dbReference type="TreeFam" id="TF329606"/>
<dbReference type="Reactome" id="R-BTA-190704">
    <property type="pathway name" value="Oligomerization of connexins into connexons"/>
</dbReference>
<dbReference type="Proteomes" id="UP000009136">
    <property type="component" value="Chromosome X"/>
</dbReference>
<dbReference type="Bgee" id="ENSBTAG00000020512">
    <property type="expression patterns" value="Expressed in corpus epididymis and 71 other cell types or tissues"/>
</dbReference>
<dbReference type="GO" id="GO:0005922">
    <property type="term" value="C:connexin complex"/>
    <property type="evidence" value="ECO:0000318"/>
    <property type="project" value="GO_Central"/>
</dbReference>
<dbReference type="GO" id="GO:0005737">
    <property type="term" value="C:cytoplasm"/>
    <property type="evidence" value="ECO:0007669"/>
    <property type="project" value="Ensembl"/>
</dbReference>
<dbReference type="GO" id="GO:0005886">
    <property type="term" value="C:plasma membrane"/>
    <property type="evidence" value="ECO:0000250"/>
    <property type="project" value="AgBase"/>
</dbReference>
<dbReference type="GO" id="GO:0005243">
    <property type="term" value="F:gap junction channel activity"/>
    <property type="evidence" value="ECO:0000250"/>
    <property type="project" value="AgBase"/>
</dbReference>
<dbReference type="GO" id="GO:0042802">
    <property type="term" value="F:identical protein binding"/>
    <property type="evidence" value="ECO:0007669"/>
    <property type="project" value="Ensembl"/>
</dbReference>
<dbReference type="GO" id="GO:0007267">
    <property type="term" value="P:cell-cell signaling"/>
    <property type="evidence" value="ECO:0000318"/>
    <property type="project" value="GO_Central"/>
</dbReference>
<dbReference type="GO" id="GO:0015868">
    <property type="term" value="P:purine ribonucleotide transport"/>
    <property type="evidence" value="ECO:0000250"/>
    <property type="project" value="AgBase"/>
</dbReference>
<dbReference type="FunFam" id="1.20.1440.80:FF:000001">
    <property type="entry name" value="Gap junction alpha-1"/>
    <property type="match status" value="1"/>
</dbReference>
<dbReference type="Gene3D" id="1.20.1440.80">
    <property type="entry name" value="Gap junction channel protein cysteine-rich domain"/>
    <property type="match status" value="1"/>
</dbReference>
<dbReference type="InterPro" id="IPR000500">
    <property type="entry name" value="Connexin"/>
</dbReference>
<dbReference type="InterPro" id="IPR002267">
    <property type="entry name" value="Connexin32"/>
</dbReference>
<dbReference type="InterPro" id="IPR019570">
    <property type="entry name" value="Connexin_CCC"/>
</dbReference>
<dbReference type="InterPro" id="IPR017990">
    <property type="entry name" value="Connexin_CS"/>
</dbReference>
<dbReference type="InterPro" id="IPR013092">
    <property type="entry name" value="Connexin_N"/>
</dbReference>
<dbReference type="InterPro" id="IPR038359">
    <property type="entry name" value="Connexin_N_sf"/>
</dbReference>
<dbReference type="PANTHER" id="PTHR11984">
    <property type="entry name" value="CONNEXIN"/>
    <property type="match status" value="1"/>
</dbReference>
<dbReference type="PANTHER" id="PTHR11984:SF20">
    <property type="entry name" value="GAP JUNCTION BETA-1 PROTEIN"/>
    <property type="match status" value="1"/>
</dbReference>
<dbReference type="Pfam" id="PF00029">
    <property type="entry name" value="Connexin"/>
    <property type="match status" value="1"/>
</dbReference>
<dbReference type="PRINTS" id="PR00206">
    <property type="entry name" value="CONNEXIN"/>
</dbReference>
<dbReference type="PRINTS" id="PR01138">
    <property type="entry name" value="CONNEXINB1"/>
</dbReference>
<dbReference type="SMART" id="SM00037">
    <property type="entry name" value="CNX"/>
    <property type="match status" value="1"/>
</dbReference>
<dbReference type="SMART" id="SM01089">
    <property type="entry name" value="Connexin_CCC"/>
    <property type="match status" value="1"/>
</dbReference>
<dbReference type="PROSITE" id="PS00407">
    <property type="entry name" value="CONNEXINS_1"/>
    <property type="match status" value="1"/>
</dbReference>
<dbReference type="PROSITE" id="PS00408">
    <property type="entry name" value="CONNEXINS_2"/>
    <property type="match status" value="1"/>
</dbReference>
<feature type="chain" id="PRO_0000057847" description="Gap junction beta-1 protein">
    <location>
        <begin position="1"/>
        <end position="284"/>
    </location>
</feature>
<feature type="topological domain" description="Cytoplasmic" evidence="4">
    <location>
        <begin position="1"/>
        <end position="22"/>
    </location>
</feature>
<feature type="transmembrane region" description="Helical" evidence="4">
    <location>
        <begin position="23"/>
        <end position="45"/>
    </location>
</feature>
<feature type="topological domain" description="Extracellular" evidence="4">
    <location>
        <begin position="46"/>
        <end position="75"/>
    </location>
</feature>
<feature type="transmembrane region" description="Helical" evidence="4">
    <location>
        <begin position="76"/>
        <end position="95"/>
    </location>
</feature>
<feature type="topological domain" description="Cytoplasmic" evidence="4">
    <location>
        <begin position="96"/>
        <end position="130"/>
    </location>
</feature>
<feature type="transmembrane region" description="Helical" evidence="4">
    <location>
        <begin position="131"/>
        <end position="153"/>
    </location>
</feature>
<feature type="topological domain" description="Extracellular" evidence="4">
    <location>
        <begin position="154"/>
        <end position="191"/>
    </location>
</feature>
<feature type="transmembrane region" description="Helical" evidence="4">
    <location>
        <begin position="192"/>
        <end position="214"/>
    </location>
</feature>
<feature type="topological domain" description="Cytoplasmic" evidence="4">
    <location>
        <begin position="215"/>
        <end position="284"/>
    </location>
</feature>
<feature type="modified residue" description="Phosphoserine" evidence="2">
    <location>
        <position position="233"/>
    </location>
</feature>
<feature type="modified residue" description="Phosphoserine" evidence="3">
    <location>
        <position position="259"/>
    </location>
</feature>
<feature type="modified residue" description="Phosphoserine" evidence="3">
    <location>
        <position position="267"/>
    </location>
</feature>
<feature type="modified residue" description="Phosphoserine" evidence="3">
    <location>
        <position position="278"/>
    </location>
</feature>